<sequence length="233" mass="24611">MAKISKRINKIREGVDRNKLYDLSAAIGLVKERAVAKFDETVEIAMNLGVDPRHADQMVRGVVNLPNGTGRTVRVAVFARGDKAEEAKKAGADIVGAEELFEIVNGGKIEFDRCIATPDMMPLVGRLGKVLGPRGMMPNPKVGTVTTDVAAAVAASKGGAVEFRVEKAGIIHAGIGKVSFDNAKLEENIKAFADAVIKAKPSAAKGEYVKRVSISSTMGVGVKVDPSTVKVVD</sequence>
<evidence type="ECO:0000255" key="1">
    <source>
        <dbReference type="HAMAP-Rule" id="MF_01318"/>
    </source>
</evidence>
<evidence type="ECO:0000305" key="2"/>
<protein>
    <recommendedName>
        <fullName evidence="1">Large ribosomal subunit protein uL1</fullName>
    </recommendedName>
    <alternativeName>
        <fullName evidence="2">50S ribosomal protein L1</fullName>
    </alternativeName>
</protein>
<comment type="function">
    <text evidence="1">Binds directly to 23S rRNA. The L1 stalk is quite mobile in the ribosome, and is involved in E site tRNA release.</text>
</comment>
<comment type="function">
    <text evidence="1">Protein L1 is also a translational repressor protein, it controls the translation of the L11 operon by binding to its mRNA.</text>
</comment>
<comment type="subunit">
    <text evidence="1">Part of the 50S ribosomal subunit.</text>
</comment>
<comment type="similarity">
    <text evidence="1">Belongs to the universal ribosomal protein uL1 family.</text>
</comment>
<reference key="1">
    <citation type="journal article" date="2009" name="PLoS ONE">
        <title>Genome degradation in Brucella ovis corresponds with narrowing of its host range and tissue tropism.</title>
        <authorList>
            <person name="Tsolis R.M."/>
            <person name="Seshadri R."/>
            <person name="Santos R.L."/>
            <person name="Sangari F.J."/>
            <person name="Lobo J.M."/>
            <person name="de Jong M.F."/>
            <person name="Ren Q."/>
            <person name="Myers G."/>
            <person name="Brinkac L.M."/>
            <person name="Nelson W.C."/>
            <person name="Deboy R.T."/>
            <person name="Angiuoli S."/>
            <person name="Khouri H."/>
            <person name="Dimitrov G."/>
            <person name="Robinson J.R."/>
            <person name="Mulligan S."/>
            <person name="Walker R.L."/>
            <person name="Elzer P.E."/>
            <person name="Hassan K.A."/>
            <person name="Paulsen I.T."/>
        </authorList>
    </citation>
    <scope>NUCLEOTIDE SEQUENCE [LARGE SCALE GENOMIC DNA]</scope>
    <source>
        <strain>ATCC 25840 / 63/290 / NCTC 10512</strain>
    </source>
</reference>
<name>RL1_BRUO2</name>
<keyword id="KW-0678">Repressor</keyword>
<keyword id="KW-0687">Ribonucleoprotein</keyword>
<keyword id="KW-0689">Ribosomal protein</keyword>
<keyword id="KW-0694">RNA-binding</keyword>
<keyword id="KW-0699">rRNA-binding</keyword>
<keyword id="KW-0810">Translation regulation</keyword>
<keyword id="KW-0820">tRNA-binding</keyword>
<accession>A5VR18</accession>
<gene>
    <name evidence="1" type="primary">rplA</name>
    <name type="ordered locus">BOV_1208</name>
</gene>
<feature type="chain" id="PRO_0000307969" description="Large ribosomal subunit protein uL1">
    <location>
        <begin position="1"/>
        <end position="233"/>
    </location>
</feature>
<dbReference type="EMBL" id="CP000708">
    <property type="protein sequence ID" value="ABQ61760.1"/>
    <property type="molecule type" value="Genomic_DNA"/>
</dbReference>
<dbReference type="RefSeq" id="WP_002964373.1">
    <property type="nucleotide sequence ID" value="NC_009505.1"/>
</dbReference>
<dbReference type="SMR" id="A5VR18"/>
<dbReference type="GeneID" id="97533514"/>
<dbReference type="KEGG" id="bov:BOV_1208"/>
<dbReference type="HOGENOM" id="CLU_062853_0_0_5"/>
<dbReference type="PhylomeDB" id="A5VR18"/>
<dbReference type="Proteomes" id="UP000006383">
    <property type="component" value="Chromosome I"/>
</dbReference>
<dbReference type="GO" id="GO:0022625">
    <property type="term" value="C:cytosolic large ribosomal subunit"/>
    <property type="evidence" value="ECO:0007669"/>
    <property type="project" value="TreeGrafter"/>
</dbReference>
<dbReference type="GO" id="GO:0019843">
    <property type="term" value="F:rRNA binding"/>
    <property type="evidence" value="ECO:0007669"/>
    <property type="project" value="UniProtKB-UniRule"/>
</dbReference>
<dbReference type="GO" id="GO:0003735">
    <property type="term" value="F:structural constituent of ribosome"/>
    <property type="evidence" value="ECO:0007669"/>
    <property type="project" value="InterPro"/>
</dbReference>
<dbReference type="GO" id="GO:0000049">
    <property type="term" value="F:tRNA binding"/>
    <property type="evidence" value="ECO:0007669"/>
    <property type="project" value="UniProtKB-KW"/>
</dbReference>
<dbReference type="GO" id="GO:0006417">
    <property type="term" value="P:regulation of translation"/>
    <property type="evidence" value="ECO:0007669"/>
    <property type="project" value="UniProtKB-KW"/>
</dbReference>
<dbReference type="GO" id="GO:0006412">
    <property type="term" value="P:translation"/>
    <property type="evidence" value="ECO:0007669"/>
    <property type="project" value="UniProtKB-UniRule"/>
</dbReference>
<dbReference type="CDD" id="cd00403">
    <property type="entry name" value="Ribosomal_L1"/>
    <property type="match status" value="1"/>
</dbReference>
<dbReference type="FunFam" id="3.40.50.790:FF:000001">
    <property type="entry name" value="50S ribosomal protein L1"/>
    <property type="match status" value="1"/>
</dbReference>
<dbReference type="Gene3D" id="3.30.190.20">
    <property type="match status" value="1"/>
</dbReference>
<dbReference type="Gene3D" id="3.40.50.790">
    <property type="match status" value="1"/>
</dbReference>
<dbReference type="HAMAP" id="MF_01318_B">
    <property type="entry name" value="Ribosomal_uL1_B"/>
    <property type="match status" value="1"/>
</dbReference>
<dbReference type="InterPro" id="IPR005878">
    <property type="entry name" value="Ribosom_uL1_bac-type"/>
</dbReference>
<dbReference type="InterPro" id="IPR002143">
    <property type="entry name" value="Ribosomal_uL1"/>
</dbReference>
<dbReference type="InterPro" id="IPR023674">
    <property type="entry name" value="Ribosomal_uL1-like"/>
</dbReference>
<dbReference type="InterPro" id="IPR028364">
    <property type="entry name" value="Ribosomal_uL1/biogenesis"/>
</dbReference>
<dbReference type="InterPro" id="IPR016095">
    <property type="entry name" value="Ribosomal_uL1_3-a/b-sand"/>
</dbReference>
<dbReference type="InterPro" id="IPR023673">
    <property type="entry name" value="Ribosomal_uL1_CS"/>
</dbReference>
<dbReference type="NCBIfam" id="TIGR01169">
    <property type="entry name" value="rplA_bact"/>
    <property type="match status" value="1"/>
</dbReference>
<dbReference type="PANTHER" id="PTHR36427">
    <property type="entry name" value="54S RIBOSOMAL PROTEIN L1, MITOCHONDRIAL"/>
    <property type="match status" value="1"/>
</dbReference>
<dbReference type="PANTHER" id="PTHR36427:SF3">
    <property type="entry name" value="LARGE RIBOSOMAL SUBUNIT PROTEIN UL1M"/>
    <property type="match status" value="1"/>
</dbReference>
<dbReference type="Pfam" id="PF00687">
    <property type="entry name" value="Ribosomal_L1"/>
    <property type="match status" value="1"/>
</dbReference>
<dbReference type="PIRSF" id="PIRSF002155">
    <property type="entry name" value="Ribosomal_L1"/>
    <property type="match status" value="1"/>
</dbReference>
<dbReference type="SUPFAM" id="SSF56808">
    <property type="entry name" value="Ribosomal protein L1"/>
    <property type="match status" value="1"/>
</dbReference>
<dbReference type="PROSITE" id="PS01199">
    <property type="entry name" value="RIBOSOMAL_L1"/>
    <property type="match status" value="1"/>
</dbReference>
<proteinExistence type="inferred from homology"/>
<organism>
    <name type="scientific">Brucella ovis (strain ATCC 25840 / 63/290 / NCTC 10512)</name>
    <dbReference type="NCBI Taxonomy" id="444178"/>
    <lineage>
        <taxon>Bacteria</taxon>
        <taxon>Pseudomonadati</taxon>
        <taxon>Pseudomonadota</taxon>
        <taxon>Alphaproteobacteria</taxon>
        <taxon>Hyphomicrobiales</taxon>
        <taxon>Brucellaceae</taxon>
        <taxon>Brucella/Ochrobactrum group</taxon>
        <taxon>Brucella</taxon>
    </lineage>
</organism>